<comment type="function">
    <text evidence="1">Necessary for normal cell division and for the maintenance of normal septation.</text>
</comment>
<comment type="cofactor">
    <cofactor evidence="1">
        <name>Mg(2+)</name>
        <dbReference type="ChEBI" id="CHEBI:18420"/>
    </cofactor>
</comment>
<comment type="similarity">
    <text evidence="1">Belongs to the TRAFAC class TrmE-Era-EngA-EngB-Septin-like GTPase superfamily. EngB GTPase family.</text>
</comment>
<proteinExistence type="inferred from homology"/>
<feature type="chain" id="PRO_1000072020" description="Probable GTP-binding protein EngB">
    <location>
        <begin position="1"/>
        <end position="220"/>
    </location>
</feature>
<feature type="domain" description="EngB-type G" evidence="1">
    <location>
        <begin position="26"/>
        <end position="200"/>
    </location>
</feature>
<feature type="binding site" evidence="1">
    <location>
        <begin position="34"/>
        <end position="41"/>
    </location>
    <ligand>
        <name>GTP</name>
        <dbReference type="ChEBI" id="CHEBI:37565"/>
    </ligand>
</feature>
<feature type="binding site" evidence="1">
    <location>
        <position position="41"/>
    </location>
    <ligand>
        <name>Mg(2+)</name>
        <dbReference type="ChEBI" id="CHEBI:18420"/>
    </ligand>
</feature>
<feature type="binding site" evidence="1">
    <location>
        <begin position="61"/>
        <end position="65"/>
    </location>
    <ligand>
        <name>GTP</name>
        <dbReference type="ChEBI" id="CHEBI:37565"/>
    </ligand>
</feature>
<feature type="binding site" evidence="1">
    <location>
        <position position="63"/>
    </location>
    <ligand>
        <name>Mg(2+)</name>
        <dbReference type="ChEBI" id="CHEBI:18420"/>
    </ligand>
</feature>
<feature type="binding site" evidence="1">
    <location>
        <begin position="79"/>
        <end position="82"/>
    </location>
    <ligand>
        <name>GTP</name>
        <dbReference type="ChEBI" id="CHEBI:37565"/>
    </ligand>
</feature>
<feature type="binding site" evidence="1">
    <location>
        <begin position="146"/>
        <end position="149"/>
    </location>
    <ligand>
        <name>GTP</name>
        <dbReference type="ChEBI" id="CHEBI:37565"/>
    </ligand>
</feature>
<feature type="binding site" evidence="1">
    <location>
        <begin position="179"/>
        <end position="181"/>
    </location>
    <ligand>
        <name>GTP</name>
        <dbReference type="ChEBI" id="CHEBI:37565"/>
    </ligand>
</feature>
<gene>
    <name evidence="1" type="primary">engB</name>
    <name type="ordered locus">VC0395_A2407</name>
    <name type="ordered locus">VC395_0069</name>
</gene>
<keyword id="KW-0131">Cell cycle</keyword>
<keyword id="KW-0132">Cell division</keyword>
<keyword id="KW-0342">GTP-binding</keyword>
<keyword id="KW-0460">Magnesium</keyword>
<keyword id="KW-0479">Metal-binding</keyword>
<keyword id="KW-0547">Nucleotide-binding</keyword>
<keyword id="KW-0717">Septation</keyword>
<reference key="1">
    <citation type="submission" date="2007-03" db="EMBL/GenBank/DDBJ databases">
        <authorList>
            <person name="Heidelberg J."/>
        </authorList>
    </citation>
    <scope>NUCLEOTIDE SEQUENCE [LARGE SCALE GENOMIC DNA]</scope>
    <source>
        <strain>ATCC 39541 / Classical Ogawa 395 / O395</strain>
    </source>
</reference>
<reference key="2">
    <citation type="journal article" date="2008" name="PLoS ONE">
        <title>A recalibrated molecular clock and independent origins for the cholera pandemic clones.</title>
        <authorList>
            <person name="Feng L."/>
            <person name="Reeves P.R."/>
            <person name="Lan R."/>
            <person name="Ren Y."/>
            <person name="Gao C."/>
            <person name="Zhou Z."/>
            <person name="Ren Y."/>
            <person name="Cheng J."/>
            <person name="Wang W."/>
            <person name="Wang J."/>
            <person name="Qian W."/>
            <person name="Li D."/>
            <person name="Wang L."/>
        </authorList>
    </citation>
    <scope>NUCLEOTIDE SEQUENCE [LARGE SCALE GENOMIC DNA]</scope>
    <source>
        <strain>ATCC 39541 / Classical Ogawa 395 / O395</strain>
    </source>
</reference>
<organism>
    <name type="scientific">Vibrio cholerae serotype O1 (strain ATCC 39541 / Classical Ogawa 395 / O395)</name>
    <dbReference type="NCBI Taxonomy" id="345073"/>
    <lineage>
        <taxon>Bacteria</taxon>
        <taxon>Pseudomonadati</taxon>
        <taxon>Pseudomonadota</taxon>
        <taxon>Gammaproteobacteria</taxon>
        <taxon>Vibrionales</taxon>
        <taxon>Vibrionaceae</taxon>
        <taxon>Vibrio</taxon>
    </lineage>
</organism>
<sequence>MSVKIHYQNTHFITSAPDIRHLPEDEGIEIAFAGRSNTGKSSSLNRLTNQKNLAKTSKTPGRTQLINLFKVADGCHIVDLPGYGFAQVPLEMKLKWQRALGEYLQKRQSLKGLVVLMDIRHPMKDLDQQLIIWAVECGIPVQVMLTKADKLKSGARKAQVLKVREEAKTFGGDVAVDAFSSLSGIGVDTLRAKLDEWYAPMLAALAEQEEGEQPESSTDQ</sequence>
<name>ENGB_VIBC3</name>
<accession>A5F4I0</accession>
<accession>C3M2D3</accession>
<protein>
    <recommendedName>
        <fullName evidence="1">Probable GTP-binding protein EngB</fullName>
    </recommendedName>
</protein>
<dbReference type="EMBL" id="CP000627">
    <property type="protein sequence ID" value="ABQ20452.1"/>
    <property type="molecule type" value="Genomic_DNA"/>
</dbReference>
<dbReference type="EMBL" id="CP001235">
    <property type="protein sequence ID" value="ACP08097.1"/>
    <property type="molecule type" value="Genomic_DNA"/>
</dbReference>
<dbReference type="SMR" id="A5F4I0"/>
<dbReference type="KEGG" id="vco:VC0395_A2407"/>
<dbReference type="KEGG" id="vcr:VC395_0069"/>
<dbReference type="PATRIC" id="fig|345073.21.peg.66"/>
<dbReference type="eggNOG" id="COG0218">
    <property type="taxonomic scope" value="Bacteria"/>
</dbReference>
<dbReference type="HOGENOM" id="CLU_033732_1_2_6"/>
<dbReference type="OrthoDB" id="9804921at2"/>
<dbReference type="Proteomes" id="UP000000249">
    <property type="component" value="Chromosome 2"/>
</dbReference>
<dbReference type="GO" id="GO:0005829">
    <property type="term" value="C:cytosol"/>
    <property type="evidence" value="ECO:0007669"/>
    <property type="project" value="TreeGrafter"/>
</dbReference>
<dbReference type="GO" id="GO:0005525">
    <property type="term" value="F:GTP binding"/>
    <property type="evidence" value="ECO:0007669"/>
    <property type="project" value="UniProtKB-UniRule"/>
</dbReference>
<dbReference type="GO" id="GO:0046872">
    <property type="term" value="F:metal ion binding"/>
    <property type="evidence" value="ECO:0007669"/>
    <property type="project" value="UniProtKB-KW"/>
</dbReference>
<dbReference type="GO" id="GO:0000917">
    <property type="term" value="P:division septum assembly"/>
    <property type="evidence" value="ECO:0007669"/>
    <property type="project" value="UniProtKB-KW"/>
</dbReference>
<dbReference type="CDD" id="cd01876">
    <property type="entry name" value="YihA_EngB"/>
    <property type="match status" value="1"/>
</dbReference>
<dbReference type="FunFam" id="3.40.50.300:FF:000098">
    <property type="entry name" value="Probable GTP-binding protein EngB"/>
    <property type="match status" value="1"/>
</dbReference>
<dbReference type="Gene3D" id="3.40.50.300">
    <property type="entry name" value="P-loop containing nucleotide triphosphate hydrolases"/>
    <property type="match status" value="1"/>
</dbReference>
<dbReference type="HAMAP" id="MF_00321">
    <property type="entry name" value="GTPase_EngB"/>
    <property type="match status" value="1"/>
</dbReference>
<dbReference type="InterPro" id="IPR030393">
    <property type="entry name" value="G_ENGB_dom"/>
</dbReference>
<dbReference type="InterPro" id="IPR006073">
    <property type="entry name" value="GTP-bd"/>
</dbReference>
<dbReference type="InterPro" id="IPR019987">
    <property type="entry name" value="GTP-bd_ribosome_bio_YsxC"/>
</dbReference>
<dbReference type="InterPro" id="IPR027417">
    <property type="entry name" value="P-loop_NTPase"/>
</dbReference>
<dbReference type="NCBIfam" id="TIGR03598">
    <property type="entry name" value="GTPase_YsxC"/>
    <property type="match status" value="1"/>
</dbReference>
<dbReference type="PANTHER" id="PTHR11649:SF13">
    <property type="entry name" value="ENGB-TYPE G DOMAIN-CONTAINING PROTEIN"/>
    <property type="match status" value="1"/>
</dbReference>
<dbReference type="PANTHER" id="PTHR11649">
    <property type="entry name" value="MSS1/TRME-RELATED GTP-BINDING PROTEIN"/>
    <property type="match status" value="1"/>
</dbReference>
<dbReference type="Pfam" id="PF01926">
    <property type="entry name" value="MMR_HSR1"/>
    <property type="match status" value="1"/>
</dbReference>
<dbReference type="SUPFAM" id="SSF52540">
    <property type="entry name" value="P-loop containing nucleoside triphosphate hydrolases"/>
    <property type="match status" value="1"/>
</dbReference>
<dbReference type="PROSITE" id="PS51706">
    <property type="entry name" value="G_ENGB"/>
    <property type="match status" value="1"/>
</dbReference>
<evidence type="ECO:0000255" key="1">
    <source>
        <dbReference type="HAMAP-Rule" id="MF_00321"/>
    </source>
</evidence>